<dbReference type="EMBL" id="AY746427">
    <property type="protein sequence ID" value="AAW78336.1"/>
    <property type="molecule type" value="mRNA"/>
</dbReference>
<dbReference type="EMBL" id="AK008589">
    <property type="protein sequence ID" value="BAC25224.1"/>
    <property type="molecule type" value="mRNA"/>
</dbReference>
<dbReference type="CCDS" id="CCDS40267.1"/>
<dbReference type="RefSeq" id="NP_997541.2">
    <property type="nucleotide sequence ID" value="NM_207658.4"/>
</dbReference>
<dbReference type="SMR" id="Q8C1N8"/>
<dbReference type="FunCoup" id="Q8C1N8">
    <property type="interactions" value="557"/>
</dbReference>
<dbReference type="PaxDb" id="10090-ENSMUSP00000096496"/>
<dbReference type="PeptideAtlas" id="Q8C1N8"/>
<dbReference type="DNASU" id="382059"/>
<dbReference type="GeneID" id="382059"/>
<dbReference type="KEGG" id="mmu:382059"/>
<dbReference type="AGR" id="MGI:3639039"/>
<dbReference type="CTD" id="382059"/>
<dbReference type="MGI" id="MGI:3639039">
    <property type="gene designation" value="Defa22"/>
</dbReference>
<dbReference type="InParanoid" id="Q8C1N8"/>
<dbReference type="OrthoDB" id="87565at9989"/>
<dbReference type="PhylomeDB" id="Q8C1N8"/>
<dbReference type="Reactome" id="R-MMU-1461973">
    <property type="pathway name" value="Defensins"/>
</dbReference>
<dbReference type="Reactome" id="R-MMU-1462054">
    <property type="pathway name" value="Alpha-defensins"/>
</dbReference>
<dbReference type="Reactome" id="R-MMU-6798695">
    <property type="pathway name" value="Neutrophil degranulation"/>
</dbReference>
<dbReference type="BioGRID-ORCS" id="382059">
    <property type="hits" value="6 hits in 43 CRISPR screens"/>
</dbReference>
<dbReference type="PRO" id="PR:Q8C1N8"/>
<dbReference type="Proteomes" id="UP000000589">
    <property type="component" value="Unplaced"/>
</dbReference>
<dbReference type="RNAct" id="Q8C1N8">
    <property type="molecule type" value="protein"/>
</dbReference>
<dbReference type="GO" id="GO:0005615">
    <property type="term" value="C:extracellular space"/>
    <property type="evidence" value="ECO:0007669"/>
    <property type="project" value="InterPro"/>
</dbReference>
<dbReference type="GO" id="GO:0042742">
    <property type="term" value="P:defense response to bacterium"/>
    <property type="evidence" value="ECO:0007669"/>
    <property type="project" value="UniProtKB-KW"/>
</dbReference>
<dbReference type="InterPro" id="IPR016327">
    <property type="entry name" value="Alpha-defensin"/>
</dbReference>
<dbReference type="InterPro" id="IPR002366">
    <property type="entry name" value="Alpha-defensin_N"/>
</dbReference>
<dbReference type="InterPro" id="IPR006080">
    <property type="entry name" value="Beta/alpha-defensin_C"/>
</dbReference>
<dbReference type="PANTHER" id="PTHR11876">
    <property type="entry name" value="ALPHA-DEFENSIN 1"/>
    <property type="match status" value="1"/>
</dbReference>
<dbReference type="PANTHER" id="PTHR11876:SF2">
    <property type="entry name" value="ALPHA-DEFENSIN 1-RELATED"/>
    <property type="match status" value="1"/>
</dbReference>
<dbReference type="Pfam" id="PF00879">
    <property type="entry name" value="Defensin_propep"/>
    <property type="match status" value="1"/>
</dbReference>
<dbReference type="PIRSF" id="PIRSF001875">
    <property type="entry name" value="Alpha-defensin"/>
    <property type="match status" value="1"/>
</dbReference>
<dbReference type="SMART" id="SM01418">
    <property type="entry name" value="Defensin_propep"/>
    <property type="match status" value="1"/>
</dbReference>
<dbReference type="SMART" id="SM00048">
    <property type="entry name" value="DEFSN"/>
    <property type="match status" value="1"/>
</dbReference>
<dbReference type="SUPFAM" id="SSF57392">
    <property type="entry name" value="Defensin-like"/>
    <property type="match status" value="1"/>
</dbReference>
<organism>
    <name type="scientific">Mus musculus</name>
    <name type="common">Mouse</name>
    <dbReference type="NCBI Taxonomy" id="10090"/>
    <lineage>
        <taxon>Eukaryota</taxon>
        <taxon>Metazoa</taxon>
        <taxon>Chordata</taxon>
        <taxon>Craniata</taxon>
        <taxon>Vertebrata</taxon>
        <taxon>Euteleostomi</taxon>
        <taxon>Mammalia</taxon>
        <taxon>Eutheria</taxon>
        <taxon>Euarchontoglires</taxon>
        <taxon>Glires</taxon>
        <taxon>Rodentia</taxon>
        <taxon>Myomorpha</taxon>
        <taxon>Muroidea</taxon>
        <taxon>Muridae</taxon>
        <taxon>Murinae</taxon>
        <taxon>Mus</taxon>
        <taxon>Mus</taxon>
    </lineage>
</organism>
<accession>Q8C1N8</accession>
<sequence>MKKLVLLSALVLLAYQVQTDPIQNTDEETNTEEQPGEEDQAVSVSFGGQEGSALHEKLSRDLICLCRKRRCNRGELFYGTCAGPFLRCCRRRR</sequence>
<gene>
    <name type="primary">Defa22</name>
    <name type="synonym">Defcr22</name>
</gene>
<name>DFA22_MOUSE</name>
<keyword id="KW-0044">Antibiotic</keyword>
<keyword id="KW-0929">Antimicrobial</keyword>
<keyword id="KW-0211">Defensin</keyword>
<keyword id="KW-1015">Disulfide bond</keyword>
<keyword id="KW-1185">Reference proteome</keyword>
<keyword id="KW-0964">Secreted</keyword>
<keyword id="KW-0732">Signal</keyword>
<reference key="1">
    <citation type="journal article" date="2004" name="Physiol. Genomics">
        <title>Rapid evolution and diversification of mammalian alpha-defensins as revealed by comparative analysis of rodent and primate genes.</title>
        <authorList>
            <person name="Patil A."/>
            <person name="Hughes A.L."/>
            <person name="Zhang G."/>
        </authorList>
    </citation>
    <scope>NUCLEOTIDE SEQUENCE [MRNA]</scope>
</reference>
<reference key="2">
    <citation type="journal article" date="2005" name="Science">
        <title>The transcriptional landscape of the mammalian genome.</title>
        <authorList>
            <person name="Carninci P."/>
            <person name="Kasukawa T."/>
            <person name="Katayama S."/>
            <person name="Gough J."/>
            <person name="Frith M.C."/>
            <person name="Maeda N."/>
            <person name="Oyama R."/>
            <person name="Ravasi T."/>
            <person name="Lenhard B."/>
            <person name="Wells C."/>
            <person name="Kodzius R."/>
            <person name="Shimokawa K."/>
            <person name="Bajic V.B."/>
            <person name="Brenner S.E."/>
            <person name="Batalov S."/>
            <person name="Forrest A.R."/>
            <person name="Zavolan M."/>
            <person name="Davis M.J."/>
            <person name="Wilming L.G."/>
            <person name="Aidinis V."/>
            <person name="Allen J.E."/>
            <person name="Ambesi-Impiombato A."/>
            <person name="Apweiler R."/>
            <person name="Aturaliya R.N."/>
            <person name="Bailey T.L."/>
            <person name="Bansal M."/>
            <person name="Baxter L."/>
            <person name="Beisel K.W."/>
            <person name="Bersano T."/>
            <person name="Bono H."/>
            <person name="Chalk A.M."/>
            <person name="Chiu K.P."/>
            <person name="Choudhary V."/>
            <person name="Christoffels A."/>
            <person name="Clutterbuck D.R."/>
            <person name="Crowe M.L."/>
            <person name="Dalla E."/>
            <person name="Dalrymple B.P."/>
            <person name="de Bono B."/>
            <person name="Della Gatta G."/>
            <person name="di Bernardo D."/>
            <person name="Down T."/>
            <person name="Engstrom P."/>
            <person name="Fagiolini M."/>
            <person name="Faulkner G."/>
            <person name="Fletcher C.F."/>
            <person name="Fukushima T."/>
            <person name="Furuno M."/>
            <person name="Futaki S."/>
            <person name="Gariboldi M."/>
            <person name="Georgii-Hemming P."/>
            <person name="Gingeras T.R."/>
            <person name="Gojobori T."/>
            <person name="Green R.E."/>
            <person name="Gustincich S."/>
            <person name="Harbers M."/>
            <person name="Hayashi Y."/>
            <person name="Hensch T.K."/>
            <person name="Hirokawa N."/>
            <person name="Hill D."/>
            <person name="Huminiecki L."/>
            <person name="Iacono M."/>
            <person name="Ikeo K."/>
            <person name="Iwama A."/>
            <person name="Ishikawa T."/>
            <person name="Jakt M."/>
            <person name="Kanapin A."/>
            <person name="Katoh M."/>
            <person name="Kawasawa Y."/>
            <person name="Kelso J."/>
            <person name="Kitamura H."/>
            <person name="Kitano H."/>
            <person name="Kollias G."/>
            <person name="Krishnan S.P."/>
            <person name="Kruger A."/>
            <person name="Kummerfeld S.K."/>
            <person name="Kurochkin I.V."/>
            <person name="Lareau L.F."/>
            <person name="Lazarevic D."/>
            <person name="Lipovich L."/>
            <person name="Liu J."/>
            <person name="Liuni S."/>
            <person name="McWilliam S."/>
            <person name="Madan Babu M."/>
            <person name="Madera M."/>
            <person name="Marchionni L."/>
            <person name="Matsuda H."/>
            <person name="Matsuzawa S."/>
            <person name="Miki H."/>
            <person name="Mignone F."/>
            <person name="Miyake S."/>
            <person name="Morris K."/>
            <person name="Mottagui-Tabar S."/>
            <person name="Mulder N."/>
            <person name="Nakano N."/>
            <person name="Nakauchi H."/>
            <person name="Ng P."/>
            <person name="Nilsson R."/>
            <person name="Nishiguchi S."/>
            <person name="Nishikawa S."/>
            <person name="Nori F."/>
            <person name="Ohara O."/>
            <person name="Okazaki Y."/>
            <person name="Orlando V."/>
            <person name="Pang K.C."/>
            <person name="Pavan W.J."/>
            <person name="Pavesi G."/>
            <person name="Pesole G."/>
            <person name="Petrovsky N."/>
            <person name="Piazza S."/>
            <person name="Reed J."/>
            <person name="Reid J.F."/>
            <person name="Ring B.Z."/>
            <person name="Ringwald M."/>
            <person name="Rost B."/>
            <person name="Ruan Y."/>
            <person name="Salzberg S.L."/>
            <person name="Sandelin A."/>
            <person name="Schneider C."/>
            <person name="Schoenbach C."/>
            <person name="Sekiguchi K."/>
            <person name="Semple C.A."/>
            <person name="Seno S."/>
            <person name="Sessa L."/>
            <person name="Sheng Y."/>
            <person name="Shibata Y."/>
            <person name="Shimada H."/>
            <person name="Shimada K."/>
            <person name="Silva D."/>
            <person name="Sinclair B."/>
            <person name="Sperling S."/>
            <person name="Stupka E."/>
            <person name="Sugiura K."/>
            <person name="Sultana R."/>
            <person name="Takenaka Y."/>
            <person name="Taki K."/>
            <person name="Tammoja K."/>
            <person name="Tan S.L."/>
            <person name="Tang S."/>
            <person name="Taylor M.S."/>
            <person name="Tegner J."/>
            <person name="Teichmann S.A."/>
            <person name="Ueda H.R."/>
            <person name="van Nimwegen E."/>
            <person name="Verardo R."/>
            <person name="Wei C.L."/>
            <person name="Yagi K."/>
            <person name="Yamanishi H."/>
            <person name="Zabarovsky E."/>
            <person name="Zhu S."/>
            <person name="Zimmer A."/>
            <person name="Hide W."/>
            <person name="Bult C."/>
            <person name="Grimmond S.M."/>
            <person name="Teasdale R.D."/>
            <person name="Liu E.T."/>
            <person name="Brusic V."/>
            <person name="Quackenbush J."/>
            <person name="Wahlestedt C."/>
            <person name="Mattick J.S."/>
            <person name="Hume D.A."/>
            <person name="Kai C."/>
            <person name="Sasaki D."/>
            <person name="Tomaru Y."/>
            <person name="Fukuda S."/>
            <person name="Kanamori-Katayama M."/>
            <person name="Suzuki M."/>
            <person name="Aoki J."/>
            <person name="Arakawa T."/>
            <person name="Iida J."/>
            <person name="Imamura K."/>
            <person name="Itoh M."/>
            <person name="Kato T."/>
            <person name="Kawaji H."/>
            <person name="Kawagashira N."/>
            <person name="Kawashima T."/>
            <person name="Kojima M."/>
            <person name="Kondo S."/>
            <person name="Konno H."/>
            <person name="Nakano K."/>
            <person name="Ninomiya N."/>
            <person name="Nishio T."/>
            <person name="Okada M."/>
            <person name="Plessy C."/>
            <person name="Shibata K."/>
            <person name="Shiraki T."/>
            <person name="Suzuki S."/>
            <person name="Tagami M."/>
            <person name="Waki K."/>
            <person name="Watahiki A."/>
            <person name="Okamura-Oho Y."/>
            <person name="Suzuki H."/>
            <person name="Kawai J."/>
            <person name="Hayashizaki Y."/>
        </authorList>
    </citation>
    <scope>NUCLEOTIDE SEQUENCE [LARGE SCALE MRNA]</scope>
    <source>
        <strain>C57BL/6J</strain>
        <tissue>Small intestine</tissue>
    </source>
</reference>
<comment type="function">
    <text evidence="1">May have microbicidal activities.</text>
</comment>
<comment type="subcellular location">
    <subcellularLocation>
        <location evidence="1">Secreted</location>
    </subcellularLocation>
</comment>
<comment type="similarity">
    <text evidence="4">Belongs to the alpha-defensin family.</text>
</comment>
<proteinExistence type="inferred from homology"/>
<protein>
    <recommendedName>
        <fullName>Alpha-defensin 22</fullName>
    </recommendedName>
    <alternativeName>
        <fullName>Defensin-related cryptdin-22</fullName>
    </alternativeName>
</protein>
<feature type="signal peptide" evidence="2">
    <location>
        <begin position="1"/>
        <end position="19"/>
    </location>
</feature>
<feature type="propeptide" id="PRO_0000300070" evidence="1">
    <location>
        <begin position="20"/>
        <end position="58"/>
    </location>
</feature>
<feature type="peptide" id="PRO_0000300071" description="Alpha-defensin 22">
    <location>
        <begin position="59"/>
        <end position="93"/>
    </location>
</feature>
<feature type="region of interest" description="Disordered" evidence="3">
    <location>
        <begin position="22"/>
        <end position="41"/>
    </location>
</feature>
<feature type="compositionally biased region" description="Acidic residues" evidence="3">
    <location>
        <begin position="25"/>
        <end position="40"/>
    </location>
</feature>
<feature type="disulfide bond" evidence="1">
    <location>
        <begin position="64"/>
        <end position="89"/>
    </location>
</feature>
<feature type="disulfide bond" evidence="1">
    <location>
        <begin position="66"/>
        <end position="81"/>
    </location>
</feature>
<feature type="disulfide bond" evidence="1">
    <location>
        <begin position="71"/>
        <end position="88"/>
    </location>
</feature>
<evidence type="ECO:0000250" key="1"/>
<evidence type="ECO:0000255" key="2"/>
<evidence type="ECO:0000256" key="3">
    <source>
        <dbReference type="SAM" id="MobiDB-lite"/>
    </source>
</evidence>
<evidence type="ECO:0000305" key="4"/>